<feature type="chain" id="PRO_1000091776" description="Elongation factor G">
    <location>
        <begin position="1"/>
        <end position="695"/>
    </location>
</feature>
<feature type="domain" description="tr-type G">
    <location>
        <begin position="12"/>
        <end position="286"/>
    </location>
</feature>
<feature type="binding site" evidence="1">
    <location>
        <begin position="21"/>
        <end position="28"/>
    </location>
    <ligand>
        <name>GTP</name>
        <dbReference type="ChEBI" id="CHEBI:37565"/>
    </ligand>
</feature>
<feature type="binding site" evidence="1">
    <location>
        <begin position="85"/>
        <end position="89"/>
    </location>
    <ligand>
        <name>GTP</name>
        <dbReference type="ChEBI" id="CHEBI:37565"/>
    </ligand>
</feature>
<feature type="binding site" evidence="1">
    <location>
        <begin position="139"/>
        <end position="142"/>
    </location>
    <ligand>
        <name>GTP</name>
        <dbReference type="ChEBI" id="CHEBI:37565"/>
    </ligand>
</feature>
<dbReference type="EMBL" id="CP000969">
    <property type="protein sequence ID" value="ACB09741.1"/>
    <property type="molecule type" value="Genomic_DNA"/>
</dbReference>
<dbReference type="RefSeq" id="WP_012311095.1">
    <property type="nucleotide sequence ID" value="NC_010483.1"/>
</dbReference>
<dbReference type="SMR" id="B1LBP3"/>
<dbReference type="KEGG" id="trq:TRQ2_1397"/>
<dbReference type="HOGENOM" id="CLU_002794_4_1_0"/>
<dbReference type="Proteomes" id="UP000001687">
    <property type="component" value="Chromosome"/>
</dbReference>
<dbReference type="GO" id="GO:0005737">
    <property type="term" value="C:cytoplasm"/>
    <property type="evidence" value="ECO:0007669"/>
    <property type="project" value="UniProtKB-SubCell"/>
</dbReference>
<dbReference type="GO" id="GO:0005525">
    <property type="term" value="F:GTP binding"/>
    <property type="evidence" value="ECO:0007669"/>
    <property type="project" value="UniProtKB-UniRule"/>
</dbReference>
<dbReference type="GO" id="GO:0003924">
    <property type="term" value="F:GTPase activity"/>
    <property type="evidence" value="ECO:0007669"/>
    <property type="project" value="InterPro"/>
</dbReference>
<dbReference type="GO" id="GO:0003746">
    <property type="term" value="F:translation elongation factor activity"/>
    <property type="evidence" value="ECO:0007669"/>
    <property type="project" value="UniProtKB-UniRule"/>
</dbReference>
<dbReference type="GO" id="GO:0032790">
    <property type="term" value="P:ribosome disassembly"/>
    <property type="evidence" value="ECO:0007669"/>
    <property type="project" value="TreeGrafter"/>
</dbReference>
<dbReference type="CDD" id="cd01886">
    <property type="entry name" value="EF-G"/>
    <property type="match status" value="1"/>
</dbReference>
<dbReference type="CDD" id="cd16262">
    <property type="entry name" value="EFG_III"/>
    <property type="match status" value="1"/>
</dbReference>
<dbReference type="CDD" id="cd01434">
    <property type="entry name" value="EFG_mtEFG1_IV"/>
    <property type="match status" value="1"/>
</dbReference>
<dbReference type="CDD" id="cd03713">
    <property type="entry name" value="EFG_mtEFG_C"/>
    <property type="match status" value="1"/>
</dbReference>
<dbReference type="CDD" id="cd04088">
    <property type="entry name" value="EFG_mtEFG_II"/>
    <property type="match status" value="1"/>
</dbReference>
<dbReference type="FunFam" id="2.40.30.10:FF:000006">
    <property type="entry name" value="Elongation factor G"/>
    <property type="match status" value="1"/>
</dbReference>
<dbReference type="FunFam" id="3.30.230.10:FF:000003">
    <property type="entry name" value="Elongation factor G"/>
    <property type="match status" value="1"/>
</dbReference>
<dbReference type="FunFam" id="3.30.70.240:FF:000001">
    <property type="entry name" value="Elongation factor G"/>
    <property type="match status" value="1"/>
</dbReference>
<dbReference type="FunFam" id="3.30.70.870:FF:000001">
    <property type="entry name" value="Elongation factor G"/>
    <property type="match status" value="1"/>
</dbReference>
<dbReference type="FunFam" id="3.40.50.300:FF:000029">
    <property type="entry name" value="Elongation factor G"/>
    <property type="match status" value="1"/>
</dbReference>
<dbReference type="Gene3D" id="3.30.230.10">
    <property type="match status" value="1"/>
</dbReference>
<dbReference type="Gene3D" id="3.30.70.240">
    <property type="match status" value="1"/>
</dbReference>
<dbReference type="Gene3D" id="3.30.70.870">
    <property type="entry name" value="Elongation Factor G (Translational Gtpase), domain 3"/>
    <property type="match status" value="1"/>
</dbReference>
<dbReference type="Gene3D" id="3.40.50.300">
    <property type="entry name" value="P-loop containing nucleotide triphosphate hydrolases"/>
    <property type="match status" value="1"/>
</dbReference>
<dbReference type="Gene3D" id="2.40.30.10">
    <property type="entry name" value="Translation factors"/>
    <property type="match status" value="1"/>
</dbReference>
<dbReference type="HAMAP" id="MF_00054_B">
    <property type="entry name" value="EF_G_EF_2_B"/>
    <property type="match status" value="1"/>
</dbReference>
<dbReference type="InterPro" id="IPR053905">
    <property type="entry name" value="EF-G-like_DII"/>
</dbReference>
<dbReference type="InterPro" id="IPR041095">
    <property type="entry name" value="EFG_II"/>
</dbReference>
<dbReference type="InterPro" id="IPR009022">
    <property type="entry name" value="EFG_III"/>
</dbReference>
<dbReference type="InterPro" id="IPR035647">
    <property type="entry name" value="EFG_III/V"/>
</dbReference>
<dbReference type="InterPro" id="IPR047872">
    <property type="entry name" value="EFG_IV"/>
</dbReference>
<dbReference type="InterPro" id="IPR035649">
    <property type="entry name" value="EFG_V"/>
</dbReference>
<dbReference type="InterPro" id="IPR000640">
    <property type="entry name" value="EFG_V-like"/>
</dbReference>
<dbReference type="InterPro" id="IPR031157">
    <property type="entry name" value="G_TR_CS"/>
</dbReference>
<dbReference type="InterPro" id="IPR027417">
    <property type="entry name" value="P-loop_NTPase"/>
</dbReference>
<dbReference type="InterPro" id="IPR020568">
    <property type="entry name" value="Ribosomal_Su5_D2-typ_SF"/>
</dbReference>
<dbReference type="InterPro" id="IPR014721">
    <property type="entry name" value="Ribsml_uS5_D2-typ_fold_subgr"/>
</dbReference>
<dbReference type="InterPro" id="IPR005225">
    <property type="entry name" value="Small_GTP-bd"/>
</dbReference>
<dbReference type="InterPro" id="IPR000795">
    <property type="entry name" value="T_Tr_GTP-bd_dom"/>
</dbReference>
<dbReference type="InterPro" id="IPR009000">
    <property type="entry name" value="Transl_B-barrel_sf"/>
</dbReference>
<dbReference type="InterPro" id="IPR004540">
    <property type="entry name" value="Transl_elong_EFG/EF2"/>
</dbReference>
<dbReference type="InterPro" id="IPR005517">
    <property type="entry name" value="Transl_elong_EFG/EF2_IV"/>
</dbReference>
<dbReference type="NCBIfam" id="TIGR00484">
    <property type="entry name" value="EF-G"/>
    <property type="match status" value="1"/>
</dbReference>
<dbReference type="NCBIfam" id="NF009379">
    <property type="entry name" value="PRK12740.1-3"/>
    <property type="match status" value="1"/>
</dbReference>
<dbReference type="NCBIfam" id="NF009381">
    <property type="entry name" value="PRK12740.1-5"/>
    <property type="match status" value="1"/>
</dbReference>
<dbReference type="NCBIfam" id="NF009891">
    <property type="entry name" value="PRK13351.1-1"/>
    <property type="match status" value="1"/>
</dbReference>
<dbReference type="NCBIfam" id="TIGR00231">
    <property type="entry name" value="small_GTP"/>
    <property type="match status" value="1"/>
</dbReference>
<dbReference type="PANTHER" id="PTHR43261:SF1">
    <property type="entry name" value="RIBOSOME-RELEASING FACTOR 2, MITOCHONDRIAL"/>
    <property type="match status" value="1"/>
</dbReference>
<dbReference type="PANTHER" id="PTHR43261">
    <property type="entry name" value="TRANSLATION ELONGATION FACTOR G-RELATED"/>
    <property type="match status" value="1"/>
</dbReference>
<dbReference type="Pfam" id="PF22042">
    <property type="entry name" value="EF-G_D2"/>
    <property type="match status" value="1"/>
</dbReference>
<dbReference type="Pfam" id="PF00679">
    <property type="entry name" value="EFG_C"/>
    <property type="match status" value="1"/>
</dbReference>
<dbReference type="Pfam" id="PF14492">
    <property type="entry name" value="EFG_III"/>
    <property type="match status" value="1"/>
</dbReference>
<dbReference type="Pfam" id="PF03764">
    <property type="entry name" value="EFG_IV"/>
    <property type="match status" value="1"/>
</dbReference>
<dbReference type="Pfam" id="PF00009">
    <property type="entry name" value="GTP_EFTU"/>
    <property type="match status" value="1"/>
</dbReference>
<dbReference type="PRINTS" id="PR00315">
    <property type="entry name" value="ELONGATNFCT"/>
</dbReference>
<dbReference type="SMART" id="SM00838">
    <property type="entry name" value="EFG_C"/>
    <property type="match status" value="1"/>
</dbReference>
<dbReference type="SMART" id="SM00889">
    <property type="entry name" value="EFG_IV"/>
    <property type="match status" value="1"/>
</dbReference>
<dbReference type="SUPFAM" id="SSF54980">
    <property type="entry name" value="EF-G C-terminal domain-like"/>
    <property type="match status" value="2"/>
</dbReference>
<dbReference type="SUPFAM" id="SSF52540">
    <property type="entry name" value="P-loop containing nucleoside triphosphate hydrolases"/>
    <property type="match status" value="1"/>
</dbReference>
<dbReference type="SUPFAM" id="SSF54211">
    <property type="entry name" value="Ribosomal protein S5 domain 2-like"/>
    <property type="match status" value="1"/>
</dbReference>
<dbReference type="SUPFAM" id="SSF50447">
    <property type="entry name" value="Translation proteins"/>
    <property type="match status" value="1"/>
</dbReference>
<dbReference type="PROSITE" id="PS00301">
    <property type="entry name" value="G_TR_1"/>
    <property type="match status" value="1"/>
</dbReference>
<dbReference type="PROSITE" id="PS51722">
    <property type="entry name" value="G_TR_2"/>
    <property type="match status" value="1"/>
</dbReference>
<reference key="1">
    <citation type="journal article" date="2011" name="J. Bacteriol.">
        <title>Genome sequence of Thermotoga sp. strain RQ2, a hyperthermophilic bacterium isolated from a geothermally heated region of the seafloor near Ribeira Quente, the Azores.</title>
        <authorList>
            <person name="Swithers K.S."/>
            <person name="DiPippo J.L."/>
            <person name="Bruce D.C."/>
            <person name="Detter C."/>
            <person name="Tapia R."/>
            <person name="Han S."/>
            <person name="Saunders E."/>
            <person name="Goodwin L.A."/>
            <person name="Han J."/>
            <person name="Woyke T."/>
            <person name="Pitluck S."/>
            <person name="Pennacchio L."/>
            <person name="Nolan M."/>
            <person name="Mikhailova N."/>
            <person name="Lykidis A."/>
            <person name="Land M.L."/>
            <person name="Brettin T."/>
            <person name="Stetter K.O."/>
            <person name="Nelson K.E."/>
            <person name="Gogarten J.P."/>
            <person name="Noll K.M."/>
        </authorList>
    </citation>
    <scope>NUCLEOTIDE SEQUENCE [LARGE SCALE GENOMIC DNA]</scope>
    <source>
        <strain>RQ2</strain>
    </source>
</reference>
<gene>
    <name evidence="1" type="primary">fusA</name>
    <name type="ordered locus">TRQ2_1397</name>
</gene>
<keyword id="KW-0963">Cytoplasm</keyword>
<keyword id="KW-0251">Elongation factor</keyword>
<keyword id="KW-0342">GTP-binding</keyword>
<keyword id="KW-0547">Nucleotide-binding</keyword>
<keyword id="KW-0648">Protein biosynthesis</keyword>
<comment type="function">
    <text evidence="1">Catalyzes the GTP-dependent ribosomal translocation step during translation elongation. During this step, the ribosome changes from the pre-translocational (PRE) to the post-translocational (POST) state as the newly formed A-site-bound peptidyl-tRNA and P-site-bound deacylated tRNA move to the P and E sites, respectively. Catalyzes the coordinated movement of the two tRNA molecules, the mRNA and conformational changes in the ribosome.</text>
</comment>
<comment type="subcellular location">
    <subcellularLocation>
        <location evidence="1">Cytoplasm</location>
    </subcellularLocation>
</comment>
<comment type="similarity">
    <text evidence="1">Belongs to the TRAFAC class translation factor GTPase superfamily. Classic translation factor GTPase family. EF-G/EF-2 subfamily.</text>
</comment>
<accession>B1LBP3</accession>
<sequence>MENVEARYVDLDKLRNIGIMAHIDAGKTTTTERILYYTGRKHFLGDVDEGNTTTDWMPQEKERGITIQSAATTCFWKGYRINIIDTPGHVDFTAEVERALRVLDGAIAVFDATAGVEPQSETVWRQADKYNVPRIAFMNKMDKVGADFYMAVETLVTKLKANPIPVQMPIGSEKDFQGVIDLIKMKAIYWVSEDGSVYEERDIPEELREEAEMRREEMLEKVAELDEEILEKYLEGEEISEEEIKRILRKATIENRAVPVLCGAAKANKGIQPLLDAVIDYLPSPLDLPPVKGWRVSDGEIVYRKPDENEPFTALVFKVQVDPYIGKLVYFRVYSGRLEKGSYVYNSTKGQRERISRIVFMHADKREEVDYVRPGDIAAGVGLKVSQTGDTLCDEKEPVILEKIDFPEPVISLAIEPATKADEEKLVKALLALSEEDPTLQVRVDKETGETIISGMGELHLEIVVDRLKREFGVNVRVGQPQVAYRETIKRPAEAEGKYIRQTGGRGQYGHVILRIEPIPEEEGKNFEFIDKTVGGVIPKEFMPAIEAGIKEAMMSGPLAGYPVVRVRAVVLDGSYHEVDSSEMAFKIAASMAFKEAMKKAQPVLLEPIMKLEITTPEEYMGNIISDLNSRRAKIESLETRGHLKIVVAKIPLSETFGYATVLRSLSQGRASYIMQFSHYQEVPEKIAEKIIKVV</sequence>
<evidence type="ECO:0000255" key="1">
    <source>
        <dbReference type="HAMAP-Rule" id="MF_00054"/>
    </source>
</evidence>
<name>EFG_THESQ</name>
<proteinExistence type="inferred from homology"/>
<organism>
    <name type="scientific">Thermotoga sp. (strain RQ2)</name>
    <dbReference type="NCBI Taxonomy" id="126740"/>
    <lineage>
        <taxon>Bacteria</taxon>
        <taxon>Thermotogati</taxon>
        <taxon>Thermotogota</taxon>
        <taxon>Thermotogae</taxon>
        <taxon>Thermotogales</taxon>
        <taxon>Thermotogaceae</taxon>
        <taxon>Thermotoga</taxon>
    </lineage>
</organism>
<protein>
    <recommendedName>
        <fullName evidence="1">Elongation factor G</fullName>
        <shortName evidence="1">EF-G</shortName>
    </recommendedName>
</protein>